<gene>
    <name type="primary">CAD1</name>
</gene>
<proteinExistence type="inferred from homology"/>
<comment type="function">
    <text evidence="1">Involved in lignin biosynthesis. Catalyzes the final step specific for the production of lignin monomers. Catalyzes the NADPH-dependent reduction of coniferaldehyde, 5-hydroxyconiferaldehyde, sinapaldehyde, 4-coumaraldehyde and caffeyl aldehyde to their respective alcohols.</text>
</comment>
<comment type="catalytic activity">
    <reaction evidence="1">
        <text>(E)-cinnamyl alcohol + NADP(+) = (E)-cinnamaldehyde + NADPH + H(+)</text>
        <dbReference type="Rhea" id="RHEA:10392"/>
        <dbReference type="ChEBI" id="CHEBI:15378"/>
        <dbReference type="ChEBI" id="CHEBI:16731"/>
        <dbReference type="ChEBI" id="CHEBI:33227"/>
        <dbReference type="ChEBI" id="CHEBI:57783"/>
        <dbReference type="ChEBI" id="CHEBI:58349"/>
        <dbReference type="EC" id="1.1.1.195"/>
    </reaction>
    <physiologicalReaction direction="right-to-left" evidence="1">
        <dbReference type="Rhea" id="RHEA:10394"/>
    </physiologicalReaction>
</comment>
<comment type="catalytic activity">
    <reaction evidence="1">
        <text>(E)-coniferol + NADP(+) = (E)-coniferaldehyde + NADPH + H(+)</text>
        <dbReference type="Rhea" id="RHEA:22444"/>
        <dbReference type="ChEBI" id="CHEBI:15378"/>
        <dbReference type="ChEBI" id="CHEBI:16547"/>
        <dbReference type="ChEBI" id="CHEBI:17745"/>
        <dbReference type="ChEBI" id="CHEBI:57783"/>
        <dbReference type="ChEBI" id="CHEBI:58349"/>
        <dbReference type="EC" id="1.1.1.195"/>
    </reaction>
    <physiologicalReaction direction="right-to-left" evidence="1">
        <dbReference type="Rhea" id="RHEA:22446"/>
    </physiologicalReaction>
</comment>
<comment type="catalytic activity">
    <reaction evidence="1">
        <text>(E)-sinapyl alcohol + NADP(+) = (E)-sinapaldehyde + NADPH + H(+)</text>
        <dbReference type="Rhea" id="RHEA:45704"/>
        <dbReference type="ChEBI" id="CHEBI:15378"/>
        <dbReference type="ChEBI" id="CHEBI:27949"/>
        <dbReference type="ChEBI" id="CHEBI:57783"/>
        <dbReference type="ChEBI" id="CHEBI:58349"/>
        <dbReference type="ChEBI" id="CHEBI:64557"/>
        <dbReference type="EC" id="1.1.1.195"/>
    </reaction>
    <physiologicalReaction direction="right-to-left" evidence="1">
        <dbReference type="Rhea" id="RHEA:45706"/>
    </physiologicalReaction>
</comment>
<comment type="catalytic activity">
    <reaction evidence="1">
        <text>(E)-4-coumaroyl alcohol + NADP(+) = (E)-4-coumaraldehyde + NADPH + H(+)</text>
        <dbReference type="Rhea" id="RHEA:45724"/>
        <dbReference type="ChEBI" id="CHEBI:15378"/>
        <dbReference type="ChEBI" id="CHEBI:28353"/>
        <dbReference type="ChEBI" id="CHEBI:57783"/>
        <dbReference type="ChEBI" id="CHEBI:58349"/>
        <dbReference type="ChEBI" id="CHEBI:64555"/>
        <dbReference type="EC" id="1.1.1.195"/>
    </reaction>
    <physiologicalReaction direction="right-to-left" evidence="1">
        <dbReference type="Rhea" id="RHEA:45726"/>
    </physiologicalReaction>
</comment>
<comment type="catalytic activity">
    <reaction evidence="1">
        <text>(E)-caffeyl alcohol + NADP(+) = (E)-caffeyl aldehyde + NADPH + H(+)</text>
        <dbReference type="Rhea" id="RHEA:45728"/>
        <dbReference type="ChEBI" id="CHEBI:15378"/>
        <dbReference type="ChEBI" id="CHEBI:28323"/>
        <dbReference type="ChEBI" id="CHEBI:31334"/>
        <dbReference type="ChEBI" id="CHEBI:57783"/>
        <dbReference type="ChEBI" id="CHEBI:58349"/>
    </reaction>
    <physiologicalReaction direction="right-to-left" evidence="1">
        <dbReference type="Rhea" id="RHEA:45730"/>
    </physiologicalReaction>
</comment>
<comment type="cofactor">
    <cofactor evidence="1">
        <name>Zn(2+)</name>
        <dbReference type="ChEBI" id="CHEBI:29105"/>
    </cofactor>
    <text evidence="1">Binds 2 Zn(2+) ions per subunit.</text>
</comment>
<comment type="pathway">
    <text evidence="1">Aromatic compound metabolism; phenylpropanoid biosynthesis.</text>
</comment>
<comment type="subunit">
    <text evidence="1">Homodimer.</text>
</comment>
<comment type="similarity">
    <text evidence="2">Belongs to the zinc-containing alcohol dehydrogenase family.</text>
</comment>
<comment type="sequence caution" evidence="2">
    <conflict type="erroneous gene model prediction">
        <sequence resource="EMBL-CDS" id="BAA04046"/>
    </conflict>
</comment>
<accession>P50746</accession>
<sequence length="355" mass="38679">MGSLEKERTTTGWAARDPSGVLSPYTYSLRNTGPEDLYIKVLSCGICHSDIHQIKNDLGMSHYPMVPGHEVVGEVLEVGSEVTKYRVGDRVGTGIVVGCCRSCGPCNSDQEQYCNKKIWNYNDVYTDGKPTQGGFAGEIVVGQRFVVKIPDGLESEQDAVMCAGVTVYSPLVRFGLKQSGLRGGILGLGGVGHMGVKIAKAMGHHVTVISSSDKKRTEALEHLGADAYLVSSDENGMKEATDSLDYIFDTIPVVHPLEPYLALLKLDGKLILTGVINAPLQFISPMVMLGRKSITGSFIGSMKETEEMLEFCKEKGLTSQIEVIKMDYVNTALERLEKNDVRYRFVVDVAGSKLD</sequence>
<reference key="1">
    <citation type="journal article" date="1994" name="Plant Physiol.">
        <title>Nucleotide sequence of a Eucalyptus botryoides gene encoding cinnamyl alcohol dehydrogenase.</title>
        <authorList>
            <person name="Hibino T."/>
            <person name="Chen J.-Q."/>
            <person name="Shibata D."/>
            <person name="Higuchi T."/>
        </authorList>
    </citation>
    <scope>NUCLEOTIDE SEQUENCE [GENOMIC DNA]</scope>
    <source>
        <tissue>Callus</tissue>
    </source>
</reference>
<feature type="chain" id="PRO_0000160792" description="Probable cinnamyl alcohol dehydrogenase">
    <location>
        <begin position="1"/>
        <end position="355"/>
    </location>
</feature>
<feature type="binding site" evidence="1">
    <location>
        <position position="47"/>
    </location>
    <ligand>
        <name>Zn(2+)</name>
        <dbReference type="ChEBI" id="CHEBI:29105"/>
        <label>1</label>
        <note>catalytic</note>
    </ligand>
</feature>
<feature type="binding site" evidence="1">
    <location>
        <position position="49"/>
    </location>
    <ligand>
        <name>NADP(+)</name>
        <dbReference type="ChEBI" id="CHEBI:58349"/>
    </ligand>
</feature>
<feature type="binding site" evidence="1">
    <location>
        <position position="69"/>
    </location>
    <ligand>
        <name>Zn(2+)</name>
        <dbReference type="ChEBI" id="CHEBI:29105"/>
        <label>1</label>
        <note>catalytic</note>
    </ligand>
</feature>
<feature type="binding site" evidence="1">
    <location>
        <position position="70"/>
    </location>
    <ligand>
        <name>Zn(2+)</name>
        <dbReference type="ChEBI" id="CHEBI:29105"/>
        <label>1</label>
        <note>catalytic</note>
    </ligand>
</feature>
<feature type="binding site" evidence="1">
    <location>
        <position position="100"/>
    </location>
    <ligand>
        <name>Zn(2+)</name>
        <dbReference type="ChEBI" id="CHEBI:29105"/>
        <label>2</label>
    </ligand>
</feature>
<feature type="binding site" evidence="1">
    <location>
        <position position="103"/>
    </location>
    <ligand>
        <name>Zn(2+)</name>
        <dbReference type="ChEBI" id="CHEBI:29105"/>
        <label>2</label>
    </ligand>
</feature>
<feature type="binding site" evidence="1">
    <location>
        <position position="106"/>
    </location>
    <ligand>
        <name>Zn(2+)</name>
        <dbReference type="ChEBI" id="CHEBI:29105"/>
        <label>2</label>
    </ligand>
</feature>
<feature type="binding site" evidence="1">
    <location>
        <position position="114"/>
    </location>
    <ligand>
        <name>Zn(2+)</name>
        <dbReference type="ChEBI" id="CHEBI:29105"/>
        <label>2</label>
    </ligand>
</feature>
<feature type="binding site" evidence="1">
    <location>
        <position position="162"/>
    </location>
    <ligand>
        <name>Zn(2+)</name>
        <dbReference type="ChEBI" id="CHEBI:29105"/>
        <label>1</label>
        <note>catalytic</note>
    </ligand>
</feature>
<feature type="binding site" evidence="1">
    <location>
        <position position="166"/>
    </location>
    <ligand>
        <name>NADP(+)</name>
        <dbReference type="ChEBI" id="CHEBI:58349"/>
    </ligand>
</feature>
<feature type="binding site" evidence="1">
    <location>
        <begin position="187"/>
        <end position="192"/>
    </location>
    <ligand>
        <name>NADP(+)</name>
        <dbReference type="ChEBI" id="CHEBI:58349"/>
    </ligand>
</feature>
<feature type="binding site" evidence="1">
    <location>
        <begin position="210"/>
        <end position="215"/>
    </location>
    <ligand>
        <name>NADP(+)</name>
        <dbReference type="ChEBI" id="CHEBI:58349"/>
    </ligand>
</feature>
<feature type="binding site" evidence="1">
    <location>
        <position position="250"/>
    </location>
    <ligand>
        <name>NADP(+)</name>
        <dbReference type="ChEBI" id="CHEBI:58349"/>
    </ligand>
</feature>
<feature type="binding site" evidence="1">
    <location>
        <position position="274"/>
    </location>
    <ligand>
        <name>NADP(+)</name>
        <dbReference type="ChEBI" id="CHEBI:58349"/>
    </ligand>
</feature>
<feature type="binding site" evidence="1">
    <location>
        <begin position="297"/>
        <end position="299"/>
    </location>
    <ligand>
        <name>NADP(+)</name>
        <dbReference type="ChEBI" id="CHEBI:58349"/>
    </ligand>
</feature>
<protein>
    <recommendedName>
        <fullName>Probable cinnamyl alcohol dehydrogenase</fullName>
        <shortName>CAD</shortName>
        <ecNumber evidence="1">1.1.1.195</ecNumber>
    </recommendedName>
</protein>
<evidence type="ECO:0000250" key="1">
    <source>
        <dbReference type="UniProtKB" id="O49482"/>
    </source>
</evidence>
<evidence type="ECO:0000305" key="2"/>
<organism>
    <name type="scientific">Eucalyptus botryoides</name>
    <name type="common">Southern mahogany</name>
    <name type="synonym">Eucalyptus saligna subsp. botryoides</name>
    <dbReference type="NCBI Taxonomy" id="33130"/>
    <lineage>
        <taxon>Eukaryota</taxon>
        <taxon>Viridiplantae</taxon>
        <taxon>Streptophyta</taxon>
        <taxon>Embryophyta</taxon>
        <taxon>Tracheophyta</taxon>
        <taxon>Spermatophyta</taxon>
        <taxon>Magnoliopsida</taxon>
        <taxon>eudicotyledons</taxon>
        <taxon>Gunneridae</taxon>
        <taxon>Pentapetalae</taxon>
        <taxon>rosids</taxon>
        <taxon>malvids</taxon>
        <taxon>Myrtales</taxon>
        <taxon>Myrtaceae</taxon>
        <taxon>Myrtoideae</taxon>
        <taxon>Eucalypteae</taxon>
        <taxon>Eucalyptus</taxon>
    </lineage>
</organism>
<name>CADH_EUCBO</name>
<keyword id="KW-0438">Lignin biosynthesis</keyword>
<keyword id="KW-0479">Metal-binding</keyword>
<keyword id="KW-0521">NADP</keyword>
<keyword id="KW-0560">Oxidoreductase</keyword>
<keyword id="KW-0862">Zinc</keyword>
<dbReference type="EC" id="1.1.1.195" evidence="1"/>
<dbReference type="EMBL" id="D16624">
    <property type="protein sequence ID" value="BAA04046.1"/>
    <property type="status" value="ALT_SEQ"/>
    <property type="molecule type" value="Genomic_DNA"/>
</dbReference>
<dbReference type="SMR" id="P50746"/>
<dbReference type="UniPathway" id="UPA00711"/>
<dbReference type="GO" id="GO:0045551">
    <property type="term" value="F:cinnamyl-alcohol dehydrogenase activity"/>
    <property type="evidence" value="ECO:0007669"/>
    <property type="project" value="UniProtKB-EC"/>
</dbReference>
<dbReference type="GO" id="GO:0050268">
    <property type="term" value="F:coniferyl-alcohol dehydrogenase activity"/>
    <property type="evidence" value="ECO:0007669"/>
    <property type="project" value="RHEA"/>
</dbReference>
<dbReference type="GO" id="GO:0008270">
    <property type="term" value="F:zinc ion binding"/>
    <property type="evidence" value="ECO:0007669"/>
    <property type="project" value="InterPro"/>
</dbReference>
<dbReference type="GO" id="GO:0009809">
    <property type="term" value="P:lignin biosynthetic process"/>
    <property type="evidence" value="ECO:0007669"/>
    <property type="project" value="UniProtKB-KW"/>
</dbReference>
<dbReference type="CDD" id="cd05283">
    <property type="entry name" value="CAD1"/>
    <property type="match status" value="1"/>
</dbReference>
<dbReference type="FunFam" id="3.40.50.720:FF:000022">
    <property type="entry name" value="Cinnamyl alcohol dehydrogenase"/>
    <property type="match status" value="1"/>
</dbReference>
<dbReference type="FunFam" id="3.90.180.10:FF:000100">
    <property type="entry name" value="Putative cinnamyl alcohol dehydrogenase 6"/>
    <property type="match status" value="1"/>
</dbReference>
<dbReference type="Gene3D" id="3.90.180.10">
    <property type="entry name" value="Medium-chain alcohol dehydrogenases, catalytic domain"/>
    <property type="match status" value="1"/>
</dbReference>
<dbReference type="Gene3D" id="3.40.50.720">
    <property type="entry name" value="NAD(P)-binding Rossmann-like Domain"/>
    <property type="match status" value="1"/>
</dbReference>
<dbReference type="InterPro" id="IPR013149">
    <property type="entry name" value="ADH-like_C"/>
</dbReference>
<dbReference type="InterPro" id="IPR013154">
    <property type="entry name" value="ADH-like_N"/>
</dbReference>
<dbReference type="InterPro" id="IPR002328">
    <property type="entry name" value="ADH_Zn_CS"/>
</dbReference>
<dbReference type="InterPro" id="IPR047109">
    <property type="entry name" value="CAD-like"/>
</dbReference>
<dbReference type="InterPro" id="IPR011032">
    <property type="entry name" value="GroES-like_sf"/>
</dbReference>
<dbReference type="InterPro" id="IPR036291">
    <property type="entry name" value="NAD(P)-bd_dom_sf"/>
</dbReference>
<dbReference type="InterPro" id="IPR020843">
    <property type="entry name" value="PKS_ER"/>
</dbReference>
<dbReference type="PANTHER" id="PTHR42683">
    <property type="entry name" value="ALDEHYDE REDUCTASE"/>
    <property type="match status" value="1"/>
</dbReference>
<dbReference type="Pfam" id="PF08240">
    <property type="entry name" value="ADH_N"/>
    <property type="match status" value="1"/>
</dbReference>
<dbReference type="Pfam" id="PF00107">
    <property type="entry name" value="ADH_zinc_N"/>
    <property type="match status" value="1"/>
</dbReference>
<dbReference type="SMART" id="SM00829">
    <property type="entry name" value="PKS_ER"/>
    <property type="match status" value="1"/>
</dbReference>
<dbReference type="SUPFAM" id="SSF50129">
    <property type="entry name" value="GroES-like"/>
    <property type="match status" value="1"/>
</dbReference>
<dbReference type="SUPFAM" id="SSF51735">
    <property type="entry name" value="NAD(P)-binding Rossmann-fold domains"/>
    <property type="match status" value="1"/>
</dbReference>
<dbReference type="PROSITE" id="PS00059">
    <property type="entry name" value="ADH_ZINC"/>
    <property type="match status" value="1"/>
</dbReference>